<name>RL2_SALEP</name>
<gene>
    <name evidence="1" type="primary">rplB</name>
    <name type="ordered locus">SEN3265</name>
</gene>
<protein>
    <recommendedName>
        <fullName evidence="1">Large ribosomal subunit protein uL2</fullName>
    </recommendedName>
    <alternativeName>
        <fullName evidence="3">50S ribosomal protein L2</fullName>
    </alternativeName>
</protein>
<evidence type="ECO:0000255" key="1">
    <source>
        <dbReference type="HAMAP-Rule" id="MF_01320"/>
    </source>
</evidence>
<evidence type="ECO:0000256" key="2">
    <source>
        <dbReference type="SAM" id="MobiDB-lite"/>
    </source>
</evidence>
<evidence type="ECO:0000305" key="3"/>
<comment type="function">
    <text evidence="1">One of the primary rRNA binding proteins. Required for association of the 30S and 50S subunits to form the 70S ribosome, for tRNA binding and peptide bond formation. It has been suggested to have peptidyltransferase activity; this is somewhat controversial. Makes several contacts with the 16S rRNA in the 70S ribosome.</text>
</comment>
<comment type="subunit">
    <text evidence="1">Part of the 50S ribosomal subunit. Forms a bridge to the 30S subunit in the 70S ribosome.</text>
</comment>
<comment type="similarity">
    <text evidence="1">Belongs to the universal ribosomal protein uL2 family.</text>
</comment>
<feature type="chain" id="PRO_1000141608" description="Large ribosomal subunit protein uL2">
    <location>
        <begin position="1"/>
        <end position="273"/>
    </location>
</feature>
<feature type="region of interest" description="Disordered" evidence="2">
    <location>
        <begin position="28"/>
        <end position="53"/>
    </location>
</feature>
<feature type="region of interest" description="Disordered" evidence="2">
    <location>
        <begin position="221"/>
        <end position="273"/>
    </location>
</feature>
<feature type="compositionally biased region" description="Low complexity" evidence="2">
    <location>
        <begin position="39"/>
        <end position="48"/>
    </location>
</feature>
<dbReference type="EMBL" id="AM933172">
    <property type="protein sequence ID" value="CAR34840.1"/>
    <property type="molecule type" value="Genomic_DNA"/>
</dbReference>
<dbReference type="RefSeq" id="WP_000301869.1">
    <property type="nucleotide sequence ID" value="NC_011294.1"/>
</dbReference>
<dbReference type="SMR" id="B5R288"/>
<dbReference type="GeneID" id="97393170"/>
<dbReference type="KEGG" id="set:SEN3265"/>
<dbReference type="HOGENOM" id="CLU_036235_2_1_6"/>
<dbReference type="Proteomes" id="UP000000613">
    <property type="component" value="Chromosome"/>
</dbReference>
<dbReference type="GO" id="GO:0005829">
    <property type="term" value="C:cytosol"/>
    <property type="evidence" value="ECO:0007669"/>
    <property type="project" value="UniProtKB-ARBA"/>
</dbReference>
<dbReference type="GO" id="GO:0015934">
    <property type="term" value="C:large ribosomal subunit"/>
    <property type="evidence" value="ECO:0007669"/>
    <property type="project" value="InterPro"/>
</dbReference>
<dbReference type="GO" id="GO:0019843">
    <property type="term" value="F:rRNA binding"/>
    <property type="evidence" value="ECO:0007669"/>
    <property type="project" value="UniProtKB-UniRule"/>
</dbReference>
<dbReference type="GO" id="GO:0003735">
    <property type="term" value="F:structural constituent of ribosome"/>
    <property type="evidence" value="ECO:0007669"/>
    <property type="project" value="InterPro"/>
</dbReference>
<dbReference type="GO" id="GO:0016740">
    <property type="term" value="F:transferase activity"/>
    <property type="evidence" value="ECO:0007669"/>
    <property type="project" value="InterPro"/>
</dbReference>
<dbReference type="GO" id="GO:0002181">
    <property type="term" value="P:cytoplasmic translation"/>
    <property type="evidence" value="ECO:0007669"/>
    <property type="project" value="TreeGrafter"/>
</dbReference>
<dbReference type="FunFam" id="2.30.30.30:FF:000001">
    <property type="entry name" value="50S ribosomal protein L2"/>
    <property type="match status" value="1"/>
</dbReference>
<dbReference type="FunFam" id="2.40.50.140:FF:000003">
    <property type="entry name" value="50S ribosomal protein L2"/>
    <property type="match status" value="1"/>
</dbReference>
<dbReference type="FunFam" id="4.10.950.10:FF:000001">
    <property type="entry name" value="50S ribosomal protein L2"/>
    <property type="match status" value="1"/>
</dbReference>
<dbReference type="Gene3D" id="2.30.30.30">
    <property type="match status" value="1"/>
</dbReference>
<dbReference type="Gene3D" id="2.40.50.140">
    <property type="entry name" value="Nucleic acid-binding proteins"/>
    <property type="match status" value="1"/>
</dbReference>
<dbReference type="Gene3D" id="4.10.950.10">
    <property type="entry name" value="Ribosomal protein L2, domain 3"/>
    <property type="match status" value="1"/>
</dbReference>
<dbReference type="HAMAP" id="MF_01320_B">
    <property type="entry name" value="Ribosomal_uL2_B"/>
    <property type="match status" value="1"/>
</dbReference>
<dbReference type="InterPro" id="IPR012340">
    <property type="entry name" value="NA-bd_OB-fold"/>
</dbReference>
<dbReference type="InterPro" id="IPR014722">
    <property type="entry name" value="Rib_uL2_dom2"/>
</dbReference>
<dbReference type="InterPro" id="IPR002171">
    <property type="entry name" value="Ribosomal_uL2"/>
</dbReference>
<dbReference type="InterPro" id="IPR005880">
    <property type="entry name" value="Ribosomal_uL2_bac/org-type"/>
</dbReference>
<dbReference type="InterPro" id="IPR022669">
    <property type="entry name" value="Ribosomal_uL2_C"/>
</dbReference>
<dbReference type="InterPro" id="IPR022671">
    <property type="entry name" value="Ribosomal_uL2_CS"/>
</dbReference>
<dbReference type="InterPro" id="IPR014726">
    <property type="entry name" value="Ribosomal_uL2_dom3"/>
</dbReference>
<dbReference type="InterPro" id="IPR022666">
    <property type="entry name" value="Ribosomal_uL2_RNA-bd_dom"/>
</dbReference>
<dbReference type="InterPro" id="IPR008991">
    <property type="entry name" value="Translation_prot_SH3-like_sf"/>
</dbReference>
<dbReference type="NCBIfam" id="TIGR01171">
    <property type="entry name" value="rplB_bact"/>
    <property type="match status" value="1"/>
</dbReference>
<dbReference type="PANTHER" id="PTHR13691:SF5">
    <property type="entry name" value="LARGE RIBOSOMAL SUBUNIT PROTEIN UL2M"/>
    <property type="match status" value="1"/>
</dbReference>
<dbReference type="PANTHER" id="PTHR13691">
    <property type="entry name" value="RIBOSOMAL PROTEIN L2"/>
    <property type="match status" value="1"/>
</dbReference>
<dbReference type="Pfam" id="PF00181">
    <property type="entry name" value="Ribosomal_L2"/>
    <property type="match status" value="1"/>
</dbReference>
<dbReference type="Pfam" id="PF03947">
    <property type="entry name" value="Ribosomal_L2_C"/>
    <property type="match status" value="1"/>
</dbReference>
<dbReference type="PIRSF" id="PIRSF002158">
    <property type="entry name" value="Ribosomal_L2"/>
    <property type="match status" value="1"/>
</dbReference>
<dbReference type="SMART" id="SM01383">
    <property type="entry name" value="Ribosomal_L2"/>
    <property type="match status" value="1"/>
</dbReference>
<dbReference type="SMART" id="SM01382">
    <property type="entry name" value="Ribosomal_L2_C"/>
    <property type="match status" value="1"/>
</dbReference>
<dbReference type="SUPFAM" id="SSF50249">
    <property type="entry name" value="Nucleic acid-binding proteins"/>
    <property type="match status" value="1"/>
</dbReference>
<dbReference type="SUPFAM" id="SSF50104">
    <property type="entry name" value="Translation proteins SH3-like domain"/>
    <property type="match status" value="1"/>
</dbReference>
<dbReference type="PROSITE" id="PS00467">
    <property type="entry name" value="RIBOSOMAL_L2"/>
    <property type="match status" value="1"/>
</dbReference>
<organism>
    <name type="scientific">Salmonella enteritidis PT4 (strain P125109)</name>
    <dbReference type="NCBI Taxonomy" id="550537"/>
    <lineage>
        <taxon>Bacteria</taxon>
        <taxon>Pseudomonadati</taxon>
        <taxon>Pseudomonadota</taxon>
        <taxon>Gammaproteobacteria</taxon>
        <taxon>Enterobacterales</taxon>
        <taxon>Enterobacteriaceae</taxon>
        <taxon>Salmonella</taxon>
    </lineage>
</organism>
<accession>B5R288</accession>
<sequence>MAVVKCKPTSPGRRHVVKVVNPELHKGKPFAPLVEKNSKSGGRNNNGRITTRHIGGGHKQAYRIVDFKRNKDGIPAVVERLEYDPNRSANIALVLYKDGERRYILAPKGLKAGDQIQSGVDAAIKAGNTLPMRNIPVGSTVHNVEMKPGKGGQLARSAGTYVQIVARDGAYVTLRLRSGEMRKVEADCRATLGEVGNAEHMLRVLGKAGAARWRGVRPTVRGTAMNPVDHPHGGGEGRNFGKHPVTPWGVQTKGKKTRSNKRTDKFIVRRRSK</sequence>
<reference key="1">
    <citation type="journal article" date="2008" name="Genome Res.">
        <title>Comparative genome analysis of Salmonella enteritidis PT4 and Salmonella gallinarum 287/91 provides insights into evolutionary and host adaptation pathways.</title>
        <authorList>
            <person name="Thomson N.R."/>
            <person name="Clayton D.J."/>
            <person name="Windhorst D."/>
            <person name="Vernikos G."/>
            <person name="Davidson S."/>
            <person name="Churcher C."/>
            <person name="Quail M.A."/>
            <person name="Stevens M."/>
            <person name="Jones M.A."/>
            <person name="Watson M."/>
            <person name="Barron A."/>
            <person name="Layton A."/>
            <person name="Pickard D."/>
            <person name="Kingsley R.A."/>
            <person name="Bignell A."/>
            <person name="Clark L."/>
            <person name="Harris B."/>
            <person name="Ormond D."/>
            <person name="Abdellah Z."/>
            <person name="Brooks K."/>
            <person name="Cherevach I."/>
            <person name="Chillingworth T."/>
            <person name="Woodward J."/>
            <person name="Norberczak H."/>
            <person name="Lord A."/>
            <person name="Arrowsmith C."/>
            <person name="Jagels K."/>
            <person name="Moule S."/>
            <person name="Mungall K."/>
            <person name="Saunders M."/>
            <person name="Whitehead S."/>
            <person name="Chabalgoity J.A."/>
            <person name="Maskell D."/>
            <person name="Humphreys T."/>
            <person name="Roberts M."/>
            <person name="Barrow P.A."/>
            <person name="Dougan G."/>
            <person name="Parkhill J."/>
        </authorList>
    </citation>
    <scope>NUCLEOTIDE SEQUENCE [LARGE SCALE GENOMIC DNA]</scope>
    <source>
        <strain>P125109</strain>
    </source>
</reference>
<keyword id="KW-0687">Ribonucleoprotein</keyword>
<keyword id="KW-0689">Ribosomal protein</keyword>
<keyword id="KW-0694">RNA-binding</keyword>
<keyword id="KW-0699">rRNA-binding</keyword>
<proteinExistence type="inferred from homology"/>